<protein>
    <recommendedName>
        <fullName evidence="1">Peptide deformylase</fullName>
        <shortName evidence="1">PDF</shortName>
        <ecNumber evidence="1">3.5.1.88</ecNumber>
    </recommendedName>
    <alternativeName>
        <fullName evidence="1">Polypeptide deformylase</fullName>
    </alternativeName>
</protein>
<gene>
    <name evidence="1" type="primary">def</name>
    <name type="synonym">pdf</name>
    <name type="ordered locus">LA_2438</name>
</gene>
<dbReference type="EC" id="3.5.1.88" evidence="1"/>
<dbReference type="EMBL" id="AY040678">
    <property type="protein sequence ID" value="AAK70806.1"/>
    <property type="molecule type" value="Genomic_DNA"/>
</dbReference>
<dbReference type="EMBL" id="AE010300">
    <property type="protein sequence ID" value="AAN49637.1"/>
    <property type="molecule type" value="Genomic_DNA"/>
</dbReference>
<dbReference type="RefSeq" id="NP_712619.1">
    <property type="nucleotide sequence ID" value="NC_004342.2"/>
</dbReference>
<dbReference type="RefSeq" id="WP_000116243.1">
    <property type="nucleotide sequence ID" value="NC_004342.2"/>
</dbReference>
<dbReference type="PDB" id="1SV2">
    <property type="method" value="X-ray"/>
    <property type="resolution" value="3.00 A"/>
    <property type="chains" value="A/B=2-178"/>
</dbReference>
<dbReference type="PDB" id="1SZZ">
    <property type="method" value="X-ray"/>
    <property type="resolution" value="3.30 A"/>
    <property type="chains" value="A/B/C/D/E/F/G/H=2-178"/>
</dbReference>
<dbReference type="PDB" id="1VEV">
    <property type="method" value="X-ray"/>
    <property type="resolution" value="2.51 A"/>
    <property type="chains" value="A/B=2-178"/>
</dbReference>
<dbReference type="PDB" id="1VEY">
    <property type="method" value="X-ray"/>
    <property type="resolution" value="3.30 A"/>
    <property type="chains" value="A/B=2-178"/>
</dbReference>
<dbReference type="PDB" id="1VEZ">
    <property type="method" value="X-ray"/>
    <property type="resolution" value="2.30 A"/>
    <property type="chains" value="A/B=2-178"/>
</dbReference>
<dbReference type="PDB" id="1Y6H">
    <property type="method" value="X-ray"/>
    <property type="resolution" value="2.20 A"/>
    <property type="chains" value="A/B=2-178"/>
</dbReference>
<dbReference type="PDBsum" id="1SV2"/>
<dbReference type="PDBsum" id="1SZZ"/>
<dbReference type="PDBsum" id="1VEV"/>
<dbReference type="PDBsum" id="1VEY"/>
<dbReference type="PDBsum" id="1VEZ"/>
<dbReference type="PDBsum" id="1Y6H"/>
<dbReference type="SMR" id="Q93LE9"/>
<dbReference type="FunCoup" id="Q93LE9">
    <property type="interactions" value="449"/>
</dbReference>
<dbReference type="STRING" id="189518.LA_2438"/>
<dbReference type="DrugBank" id="DB04310">
    <property type="generic name" value="2-[(Formyl-Hydroxy-Amino)-Methyl]-Heptanoic Acid [1-(2-Hydroxymethyl-Pyrrolidine-1-Carbonyl)-2-Methyl-Propyl]-Amide"/>
</dbReference>
<dbReference type="PaxDb" id="189518-LA_2438"/>
<dbReference type="EnsemblBacteria" id="AAN49637">
    <property type="protein sequence ID" value="AAN49637"/>
    <property type="gene ID" value="LA_2438"/>
</dbReference>
<dbReference type="GeneID" id="61144810"/>
<dbReference type="KEGG" id="lil:LA_2438"/>
<dbReference type="PATRIC" id="fig|189518.3.peg.2418"/>
<dbReference type="HOGENOM" id="CLU_061901_5_2_12"/>
<dbReference type="InParanoid" id="Q93LE9"/>
<dbReference type="OrthoDB" id="9784988at2"/>
<dbReference type="BRENDA" id="3.5.1.88">
    <property type="organism ID" value="2986"/>
</dbReference>
<dbReference type="EvolutionaryTrace" id="Q93LE9"/>
<dbReference type="Proteomes" id="UP000001408">
    <property type="component" value="Chromosome I"/>
</dbReference>
<dbReference type="GO" id="GO:0046872">
    <property type="term" value="F:metal ion binding"/>
    <property type="evidence" value="ECO:0007669"/>
    <property type="project" value="UniProtKB-KW"/>
</dbReference>
<dbReference type="GO" id="GO:0042586">
    <property type="term" value="F:peptide deformylase activity"/>
    <property type="evidence" value="ECO:0000318"/>
    <property type="project" value="GO_Central"/>
</dbReference>
<dbReference type="GO" id="GO:0043686">
    <property type="term" value="P:co-translational protein modification"/>
    <property type="evidence" value="ECO:0000318"/>
    <property type="project" value="GO_Central"/>
</dbReference>
<dbReference type="GO" id="GO:0006412">
    <property type="term" value="P:translation"/>
    <property type="evidence" value="ECO:0007669"/>
    <property type="project" value="UniProtKB-UniRule"/>
</dbReference>
<dbReference type="CDD" id="cd00487">
    <property type="entry name" value="Pep_deformylase"/>
    <property type="match status" value="1"/>
</dbReference>
<dbReference type="FunFam" id="3.90.45.10:FF:000003">
    <property type="entry name" value="Peptide deformylase"/>
    <property type="match status" value="1"/>
</dbReference>
<dbReference type="Gene3D" id="3.90.45.10">
    <property type="entry name" value="Peptide deformylase"/>
    <property type="match status" value="1"/>
</dbReference>
<dbReference type="HAMAP" id="MF_00163">
    <property type="entry name" value="Pep_deformylase"/>
    <property type="match status" value="1"/>
</dbReference>
<dbReference type="InterPro" id="IPR023635">
    <property type="entry name" value="Peptide_deformylase"/>
</dbReference>
<dbReference type="InterPro" id="IPR036821">
    <property type="entry name" value="Peptide_deformylase_sf"/>
</dbReference>
<dbReference type="NCBIfam" id="TIGR00079">
    <property type="entry name" value="pept_deformyl"/>
    <property type="match status" value="1"/>
</dbReference>
<dbReference type="NCBIfam" id="NF001159">
    <property type="entry name" value="PRK00150.1-3"/>
    <property type="match status" value="1"/>
</dbReference>
<dbReference type="PANTHER" id="PTHR10458">
    <property type="entry name" value="PEPTIDE DEFORMYLASE"/>
    <property type="match status" value="1"/>
</dbReference>
<dbReference type="PANTHER" id="PTHR10458:SF20">
    <property type="entry name" value="PEPTIDE DEFORMYLASE 1"/>
    <property type="match status" value="1"/>
</dbReference>
<dbReference type="Pfam" id="PF01327">
    <property type="entry name" value="Pep_deformylase"/>
    <property type="match status" value="1"/>
</dbReference>
<dbReference type="PIRSF" id="PIRSF004749">
    <property type="entry name" value="Pep_def"/>
    <property type="match status" value="1"/>
</dbReference>
<dbReference type="PRINTS" id="PR01576">
    <property type="entry name" value="PDEFORMYLASE"/>
</dbReference>
<dbReference type="SUPFAM" id="SSF56420">
    <property type="entry name" value="Peptide deformylase"/>
    <property type="match status" value="1"/>
</dbReference>
<comment type="function">
    <text evidence="1">Removes the formyl group from the N-terminal Met of newly synthesized proteins. Requires at least a dipeptide for an efficient rate of reaction. N-terminal L-methionine is a prerequisite for activity but the enzyme has broad specificity at other positions.</text>
</comment>
<comment type="catalytic activity">
    <reaction evidence="1">
        <text>N-terminal N-formyl-L-methionyl-[peptide] + H2O = N-terminal L-methionyl-[peptide] + formate</text>
        <dbReference type="Rhea" id="RHEA:24420"/>
        <dbReference type="Rhea" id="RHEA-COMP:10639"/>
        <dbReference type="Rhea" id="RHEA-COMP:10640"/>
        <dbReference type="ChEBI" id="CHEBI:15377"/>
        <dbReference type="ChEBI" id="CHEBI:15740"/>
        <dbReference type="ChEBI" id="CHEBI:49298"/>
        <dbReference type="ChEBI" id="CHEBI:64731"/>
        <dbReference type="EC" id="3.5.1.88"/>
    </reaction>
</comment>
<comment type="cofactor">
    <cofactor evidence="1">
        <name>Fe(2+)</name>
        <dbReference type="ChEBI" id="CHEBI:29033"/>
    </cofactor>
    <text evidence="1">Binds 1 Fe(2+) ion.</text>
</comment>
<comment type="subunit">
    <text evidence="2">Homodimer.</text>
</comment>
<comment type="similarity">
    <text evidence="1">Belongs to the polypeptide deformylase family.</text>
</comment>
<sequence length="178" mass="20379">MSVRKILRMGDPILRKISEPVTEDEIQTKEFKKLIRDMFDTMRHAEGVGLAAPQIGILKQIVVVGSEDNERYPGTPDVPERIILNPVITPLTKDTSGFWEGCLSVPGMRGYVERPNQIRMQWMDEKGNQFDETIDGYKAIVYQHECDHLQGILYVDRLKDTKLFGFNETLDSSHNVLD</sequence>
<name>DEF_LEPIN</name>
<feature type="chain" id="PRO_0000082795" description="Peptide deformylase">
    <location>
        <begin position="1"/>
        <end position="178"/>
    </location>
</feature>
<feature type="active site" evidence="1">
    <location>
        <position position="145"/>
    </location>
</feature>
<feature type="binding site" evidence="1">
    <location>
        <position position="102"/>
    </location>
    <ligand>
        <name>Fe cation</name>
        <dbReference type="ChEBI" id="CHEBI:24875"/>
    </ligand>
</feature>
<feature type="binding site" evidence="1">
    <location>
        <position position="144"/>
    </location>
    <ligand>
        <name>Fe cation</name>
        <dbReference type="ChEBI" id="CHEBI:24875"/>
    </ligand>
</feature>
<feature type="binding site" evidence="1">
    <location>
        <position position="148"/>
    </location>
    <ligand>
        <name>Fe cation</name>
        <dbReference type="ChEBI" id="CHEBI:24875"/>
    </ligand>
</feature>
<feature type="helix" evidence="4">
    <location>
        <begin position="12"/>
        <end position="15"/>
    </location>
</feature>
<feature type="helix" evidence="4">
    <location>
        <begin position="23"/>
        <end position="25"/>
    </location>
</feature>
<feature type="helix" evidence="4">
    <location>
        <begin position="29"/>
        <end position="44"/>
    </location>
</feature>
<feature type="strand" evidence="4">
    <location>
        <begin position="48"/>
        <end position="51"/>
    </location>
</feature>
<feature type="helix" evidence="4">
    <location>
        <begin position="52"/>
        <end position="55"/>
    </location>
</feature>
<feature type="strand" evidence="4">
    <location>
        <begin position="59"/>
        <end position="64"/>
    </location>
</feature>
<feature type="strand" evidence="3">
    <location>
        <begin position="70"/>
        <end position="72"/>
    </location>
</feature>
<feature type="strand" evidence="4">
    <location>
        <begin position="81"/>
        <end position="90"/>
    </location>
</feature>
<feature type="strand" evidence="4">
    <location>
        <begin position="95"/>
        <end position="102"/>
    </location>
</feature>
<feature type="strand" evidence="4">
    <location>
        <begin position="105"/>
        <end position="123"/>
    </location>
</feature>
<feature type="strand" evidence="4">
    <location>
        <begin position="129"/>
        <end position="135"/>
    </location>
</feature>
<feature type="helix" evidence="4">
    <location>
        <begin position="136"/>
        <end position="149"/>
    </location>
</feature>
<feature type="helix" evidence="4">
    <location>
        <begin position="154"/>
        <end position="157"/>
    </location>
</feature>
<feature type="strand" evidence="4">
    <location>
        <begin position="163"/>
        <end position="166"/>
    </location>
</feature>
<feature type="helix" evidence="4">
    <location>
        <begin position="167"/>
        <end position="173"/>
    </location>
</feature>
<reference key="1">
    <citation type="journal article" date="2002" name="Acta Crystallogr. D">
        <title>Cloning, high-level expression, purification and crystallization of peptide deformylase from Leptospira interrogans.</title>
        <authorList>
            <person name="Li Y."/>
            <person name="Ren S."/>
            <person name="Gong W."/>
        </authorList>
    </citation>
    <scope>NUCLEOTIDE SEQUENCE [GENOMIC DNA]</scope>
    <scope>CRYSTALLIZATION</scope>
    <source>
        <strain>Lai / Serogroup Icterohaemorrhagiae / Serovar lai</strain>
    </source>
</reference>
<reference key="2">
    <citation type="journal article" date="2003" name="Nature">
        <title>Unique physiological and pathogenic features of Leptospira interrogans revealed by whole-genome sequencing.</title>
        <authorList>
            <person name="Ren S.-X."/>
            <person name="Fu G."/>
            <person name="Jiang X.-G."/>
            <person name="Zeng R."/>
            <person name="Miao Y.-G."/>
            <person name="Xu H."/>
            <person name="Zhang Y.-X."/>
            <person name="Xiong H."/>
            <person name="Lu G."/>
            <person name="Lu L.-F."/>
            <person name="Jiang H.-Q."/>
            <person name="Jia J."/>
            <person name="Tu Y.-F."/>
            <person name="Jiang J.-X."/>
            <person name="Gu W.-Y."/>
            <person name="Zhang Y.-Q."/>
            <person name="Cai Z."/>
            <person name="Sheng H.-H."/>
            <person name="Yin H.-F."/>
            <person name="Zhang Y."/>
            <person name="Zhu G.-F."/>
            <person name="Wan M."/>
            <person name="Huang H.-L."/>
            <person name="Qian Z."/>
            <person name="Wang S.-Y."/>
            <person name="Ma W."/>
            <person name="Yao Z.-J."/>
            <person name="Shen Y."/>
            <person name="Qiang B.-Q."/>
            <person name="Xia Q.-C."/>
            <person name="Guo X.-K."/>
            <person name="Danchin A."/>
            <person name="Saint Girons I."/>
            <person name="Somerville R.L."/>
            <person name="Wen Y.-M."/>
            <person name="Shi M.-H."/>
            <person name="Chen Z."/>
            <person name="Xu J.-G."/>
            <person name="Zhao G.-P."/>
        </authorList>
    </citation>
    <scope>NUCLEOTIDE SEQUENCE [LARGE SCALE GENOMIC DNA]</scope>
    <source>
        <strain>56601</strain>
    </source>
</reference>
<reference key="3">
    <citation type="journal article" date="2004" name="J. Mol. Biol.">
        <title>Unique structural characteristics of peptide deformylase from pathogenic bacterium Leptospira interrogans.</title>
        <authorList>
            <person name="Zhou Z."/>
            <person name="Song X."/>
            <person name="Li Y."/>
            <person name="Gong W."/>
        </authorList>
    </citation>
    <scope>X-RAY CRYSTALLOGRAPHY (2.2 ANGSTROMS)</scope>
    <scope>SUBUNIT</scope>
    <source>
        <strain>Lai / Serogroup Icterohaemorrhagiae / Serovar lai</strain>
    </source>
</reference>
<keyword id="KW-0002">3D-structure</keyword>
<keyword id="KW-0378">Hydrolase</keyword>
<keyword id="KW-0408">Iron</keyword>
<keyword id="KW-0479">Metal-binding</keyword>
<keyword id="KW-0648">Protein biosynthesis</keyword>
<keyword id="KW-1185">Reference proteome</keyword>
<organism>
    <name type="scientific">Leptospira interrogans serogroup Icterohaemorrhagiae serovar Lai (strain 56601)</name>
    <dbReference type="NCBI Taxonomy" id="189518"/>
    <lineage>
        <taxon>Bacteria</taxon>
        <taxon>Pseudomonadati</taxon>
        <taxon>Spirochaetota</taxon>
        <taxon>Spirochaetia</taxon>
        <taxon>Leptospirales</taxon>
        <taxon>Leptospiraceae</taxon>
        <taxon>Leptospira</taxon>
    </lineage>
</organism>
<accession>Q93LE9</accession>
<proteinExistence type="evidence at protein level"/>
<evidence type="ECO:0000255" key="1">
    <source>
        <dbReference type="HAMAP-Rule" id="MF_00163"/>
    </source>
</evidence>
<evidence type="ECO:0000269" key="2">
    <source>
    </source>
</evidence>
<evidence type="ECO:0007829" key="3">
    <source>
        <dbReference type="PDB" id="1VEZ"/>
    </source>
</evidence>
<evidence type="ECO:0007829" key="4">
    <source>
        <dbReference type="PDB" id="1Y6H"/>
    </source>
</evidence>